<gene>
    <name type="primary">oxyR</name>
</gene>
<keyword id="KW-0010">Activator</keyword>
<keyword id="KW-0238">DNA-binding</keyword>
<keyword id="KW-0804">Transcription</keyword>
<keyword id="KW-0805">Transcription regulation</keyword>
<dbReference type="EMBL" id="U74302">
    <property type="protein sequence ID" value="AAC72241.1"/>
    <property type="molecule type" value="Genomic_DNA"/>
</dbReference>
<dbReference type="RefSeq" id="WP_010308165.1">
    <property type="nucleotide sequence ID" value="NZ_VBUA01000012.1"/>
</dbReference>
<dbReference type="SMR" id="P71318"/>
<dbReference type="GeneID" id="93392208"/>
<dbReference type="GO" id="GO:0032993">
    <property type="term" value="C:protein-DNA complex"/>
    <property type="evidence" value="ECO:0007669"/>
    <property type="project" value="TreeGrafter"/>
</dbReference>
<dbReference type="GO" id="GO:0003677">
    <property type="term" value="F:DNA binding"/>
    <property type="evidence" value="ECO:0007669"/>
    <property type="project" value="UniProtKB-KW"/>
</dbReference>
<dbReference type="GO" id="GO:0003700">
    <property type="term" value="F:DNA-binding transcription factor activity"/>
    <property type="evidence" value="ECO:0007669"/>
    <property type="project" value="InterPro"/>
</dbReference>
<dbReference type="CDD" id="cd08411">
    <property type="entry name" value="PBP2_OxyR"/>
    <property type="match status" value="1"/>
</dbReference>
<dbReference type="FunFam" id="3.40.190.10:FF:000027">
    <property type="entry name" value="DNA-binding transcriptional regulator OxyR"/>
    <property type="match status" value="1"/>
</dbReference>
<dbReference type="FunFam" id="1.10.10.10:FF:000001">
    <property type="entry name" value="LysR family transcriptional regulator"/>
    <property type="match status" value="1"/>
</dbReference>
<dbReference type="Gene3D" id="3.40.190.10">
    <property type="entry name" value="Periplasmic binding protein-like II"/>
    <property type="match status" value="2"/>
</dbReference>
<dbReference type="Gene3D" id="1.10.10.10">
    <property type="entry name" value="Winged helix-like DNA-binding domain superfamily/Winged helix DNA-binding domain"/>
    <property type="match status" value="1"/>
</dbReference>
<dbReference type="InterPro" id="IPR005119">
    <property type="entry name" value="LysR_subst-bd"/>
</dbReference>
<dbReference type="InterPro" id="IPR000847">
    <property type="entry name" value="Tscrpt_reg_HTH_LysR"/>
</dbReference>
<dbReference type="InterPro" id="IPR036388">
    <property type="entry name" value="WH-like_DNA-bd_sf"/>
</dbReference>
<dbReference type="InterPro" id="IPR036390">
    <property type="entry name" value="WH_DNA-bd_sf"/>
</dbReference>
<dbReference type="NCBIfam" id="NF008361">
    <property type="entry name" value="PRK11151.1"/>
    <property type="match status" value="1"/>
</dbReference>
<dbReference type="PANTHER" id="PTHR30346:SF26">
    <property type="entry name" value="HYDROGEN PEROXIDE-INDUCIBLE GENES ACTIVATOR"/>
    <property type="match status" value="1"/>
</dbReference>
<dbReference type="PANTHER" id="PTHR30346">
    <property type="entry name" value="TRANSCRIPTIONAL DUAL REGULATOR HCAR-RELATED"/>
    <property type="match status" value="1"/>
</dbReference>
<dbReference type="Pfam" id="PF00126">
    <property type="entry name" value="HTH_1"/>
    <property type="match status" value="1"/>
</dbReference>
<dbReference type="Pfam" id="PF03466">
    <property type="entry name" value="LysR_substrate"/>
    <property type="match status" value="1"/>
</dbReference>
<dbReference type="PRINTS" id="PR00039">
    <property type="entry name" value="HTHLYSR"/>
</dbReference>
<dbReference type="SUPFAM" id="SSF53850">
    <property type="entry name" value="Periplasmic binding protein-like II"/>
    <property type="match status" value="1"/>
</dbReference>
<dbReference type="SUPFAM" id="SSF46785">
    <property type="entry name" value="Winged helix' DNA-binding domain"/>
    <property type="match status" value="1"/>
</dbReference>
<dbReference type="PROSITE" id="PS50931">
    <property type="entry name" value="HTH_LYSR"/>
    <property type="match status" value="1"/>
</dbReference>
<name>OXYR_PECCC</name>
<feature type="chain" id="PRO_0000105731" description="Hydrogen peroxide-inducible genes activator">
    <location>
        <begin position="1"/>
        <end position="302"/>
    </location>
</feature>
<feature type="domain" description="HTH lysR-type" evidence="2">
    <location>
        <begin position="1"/>
        <end position="58"/>
    </location>
</feature>
<feature type="DNA-binding region" description="H-T-H motif" evidence="2">
    <location>
        <begin position="18"/>
        <end position="37"/>
    </location>
</feature>
<accession>P71318</accession>
<proteinExistence type="inferred from homology"/>
<reference key="1">
    <citation type="journal article" date="1998" name="FEMS Microbiol. Lett.">
        <title>The oxyR gene from Erwinia carotovora: cloning, sequence analysis and expression in Escherichia coli.</title>
        <authorList>
            <person name="Calcutt M.J."/>
            <person name="Lewis M.S."/>
            <person name="Eisenstark A."/>
        </authorList>
    </citation>
    <scope>NUCLEOTIDE SEQUENCE [GENOMIC DNA]</scope>
    <source>
        <strain>71</strain>
    </source>
</reference>
<protein>
    <recommendedName>
        <fullName>Hydrogen peroxide-inducible genes activator</fullName>
    </recommendedName>
</protein>
<sequence length="302" mass="34178">MNIRDLEYLVALAEHRHFRRAADSCHVSQPTLSGQIRKLEDELGVMLLERTSRKVLFTQAGLLLVEQARTVLREVKVLKEMASQQGETMSGPLHIGLIPTVGPYLLPQIIPMLHRTFPKLEMYLHEAQTHQLLAQLDSGKLDCAILAMVKESEAFIEVPLFDEPMKLAIYQDHPWANRERVAMSDLAGEKLLMLEDGHCLRDQAMGFCFQAGADEDTHFRATSLETLRNMVAAGSGITLLPALSVPRERERDGVCYLPCYKPEPKRTIALVYRPGSPLRGRYEQLADTIREHMQGYMETLSK</sequence>
<comment type="function">
    <text evidence="1">Required for the induction of a regulon of hydrogen peroxide inducible genes such as catalase and glutathione-reductase.</text>
</comment>
<comment type="similarity">
    <text evidence="3">Belongs to the LysR transcriptional regulatory family.</text>
</comment>
<organism>
    <name type="scientific">Pectobacterium carotovorum subsp. carotovorum</name>
    <name type="common">Erwinia carotovora subsp. carotovora</name>
    <dbReference type="NCBI Taxonomy" id="555"/>
    <lineage>
        <taxon>Bacteria</taxon>
        <taxon>Pseudomonadati</taxon>
        <taxon>Pseudomonadota</taxon>
        <taxon>Gammaproteobacteria</taxon>
        <taxon>Enterobacterales</taxon>
        <taxon>Pectobacteriaceae</taxon>
        <taxon>Pectobacterium</taxon>
    </lineage>
</organism>
<evidence type="ECO:0000250" key="1"/>
<evidence type="ECO:0000255" key="2">
    <source>
        <dbReference type="PROSITE-ProRule" id="PRU00253"/>
    </source>
</evidence>
<evidence type="ECO:0000305" key="3"/>